<dbReference type="EMBL" id="CP000108">
    <property type="protein sequence ID" value="ABB29098.1"/>
    <property type="molecule type" value="Genomic_DNA"/>
</dbReference>
<dbReference type="SMR" id="Q3APH7"/>
<dbReference type="STRING" id="340177.Cag_1847"/>
<dbReference type="KEGG" id="cch:Cag_1847"/>
<dbReference type="eggNOG" id="COG0185">
    <property type="taxonomic scope" value="Bacteria"/>
</dbReference>
<dbReference type="HOGENOM" id="CLU_144911_0_1_10"/>
<dbReference type="OrthoDB" id="9797833at2"/>
<dbReference type="GO" id="GO:0005737">
    <property type="term" value="C:cytoplasm"/>
    <property type="evidence" value="ECO:0007669"/>
    <property type="project" value="UniProtKB-ARBA"/>
</dbReference>
<dbReference type="GO" id="GO:0015935">
    <property type="term" value="C:small ribosomal subunit"/>
    <property type="evidence" value="ECO:0007669"/>
    <property type="project" value="InterPro"/>
</dbReference>
<dbReference type="GO" id="GO:0019843">
    <property type="term" value="F:rRNA binding"/>
    <property type="evidence" value="ECO:0007669"/>
    <property type="project" value="UniProtKB-UniRule"/>
</dbReference>
<dbReference type="GO" id="GO:0003735">
    <property type="term" value="F:structural constituent of ribosome"/>
    <property type="evidence" value="ECO:0007669"/>
    <property type="project" value="InterPro"/>
</dbReference>
<dbReference type="GO" id="GO:0000028">
    <property type="term" value="P:ribosomal small subunit assembly"/>
    <property type="evidence" value="ECO:0007669"/>
    <property type="project" value="TreeGrafter"/>
</dbReference>
<dbReference type="GO" id="GO:0006412">
    <property type="term" value="P:translation"/>
    <property type="evidence" value="ECO:0007669"/>
    <property type="project" value="UniProtKB-UniRule"/>
</dbReference>
<dbReference type="FunFam" id="3.30.860.10:FF:000001">
    <property type="entry name" value="30S ribosomal protein S19"/>
    <property type="match status" value="1"/>
</dbReference>
<dbReference type="Gene3D" id="3.30.860.10">
    <property type="entry name" value="30s Ribosomal Protein S19, Chain A"/>
    <property type="match status" value="1"/>
</dbReference>
<dbReference type="HAMAP" id="MF_00531">
    <property type="entry name" value="Ribosomal_uS19"/>
    <property type="match status" value="1"/>
</dbReference>
<dbReference type="InterPro" id="IPR002222">
    <property type="entry name" value="Ribosomal_uS19"/>
</dbReference>
<dbReference type="InterPro" id="IPR005732">
    <property type="entry name" value="Ribosomal_uS19_bac-type"/>
</dbReference>
<dbReference type="InterPro" id="IPR020934">
    <property type="entry name" value="Ribosomal_uS19_CS"/>
</dbReference>
<dbReference type="InterPro" id="IPR023575">
    <property type="entry name" value="Ribosomal_uS19_SF"/>
</dbReference>
<dbReference type="NCBIfam" id="TIGR01050">
    <property type="entry name" value="rpsS_bact"/>
    <property type="match status" value="1"/>
</dbReference>
<dbReference type="PANTHER" id="PTHR11880">
    <property type="entry name" value="RIBOSOMAL PROTEIN S19P FAMILY MEMBER"/>
    <property type="match status" value="1"/>
</dbReference>
<dbReference type="PANTHER" id="PTHR11880:SF8">
    <property type="entry name" value="SMALL RIBOSOMAL SUBUNIT PROTEIN US19M"/>
    <property type="match status" value="1"/>
</dbReference>
<dbReference type="Pfam" id="PF00203">
    <property type="entry name" value="Ribosomal_S19"/>
    <property type="match status" value="1"/>
</dbReference>
<dbReference type="PIRSF" id="PIRSF002144">
    <property type="entry name" value="Ribosomal_S19"/>
    <property type="match status" value="1"/>
</dbReference>
<dbReference type="PRINTS" id="PR00975">
    <property type="entry name" value="RIBOSOMALS19"/>
</dbReference>
<dbReference type="SUPFAM" id="SSF54570">
    <property type="entry name" value="Ribosomal protein S19"/>
    <property type="match status" value="1"/>
</dbReference>
<dbReference type="PROSITE" id="PS00323">
    <property type="entry name" value="RIBOSOMAL_S19"/>
    <property type="match status" value="1"/>
</dbReference>
<keyword id="KW-0687">Ribonucleoprotein</keyword>
<keyword id="KW-0689">Ribosomal protein</keyword>
<keyword id="KW-0694">RNA-binding</keyword>
<keyword id="KW-0699">rRNA-binding</keyword>
<comment type="function">
    <text evidence="1">Protein S19 forms a complex with S13 that binds strongly to the 16S ribosomal RNA.</text>
</comment>
<comment type="similarity">
    <text evidence="1">Belongs to the universal ribosomal protein uS19 family.</text>
</comment>
<name>RS19_CHLCH</name>
<protein>
    <recommendedName>
        <fullName evidence="1">Small ribosomal subunit protein uS19</fullName>
    </recommendedName>
    <alternativeName>
        <fullName evidence="3">30S ribosomal protein S19</fullName>
    </alternativeName>
</protein>
<sequence>MPRSLKKGPFIDIKLEKRILEMNSKGEKKVVKTWSRSSMISPDFVGHTVAVHNGKSHVPVYVGDNMVGHKLGEFAPTRNYRGHAGGKSEKGGSAPRKK</sequence>
<gene>
    <name evidence="1" type="primary">rpsS</name>
    <name type="ordered locus">Cag_1847</name>
</gene>
<feature type="chain" id="PRO_0000265345" description="Small ribosomal subunit protein uS19">
    <location>
        <begin position="1"/>
        <end position="98"/>
    </location>
</feature>
<feature type="region of interest" description="Disordered" evidence="2">
    <location>
        <begin position="74"/>
        <end position="98"/>
    </location>
</feature>
<proteinExistence type="inferred from homology"/>
<reference key="1">
    <citation type="submission" date="2005-08" db="EMBL/GenBank/DDBJ databases">
        <title>Complete sequence of Chlorobium chlorochromatii CaD3.</title>
        <authorList>
            <consortium name="US DOE Joint Genome Institute"/>
            <person name="Copeland A."/>
            <person name="Lucas S."/>
            <person name="Lapidus A."/>
            <person name="Barry K."/>
            <person name="Detter J.C."/>
            <person name="Glavina T."/>
            <person name="Hammon N."/>
            <person name="Israni S."/>
            <person name="Pitluck S."/>
            <person name="Bryant D."/>
            <person name="Schmutz J."/>
            <person name="Larimer F."/>
            <person name="Land M."/>
            <person name="Kyrpides N."/>
            <person name="Ivanova N."/>
            <person name="Richardson P."/>
        </authorList>
    </citation>
    <scope>NUCLEOTIDE SEQUENCE [LARGE SCALE GENOMIC DNA]</scope>
    <source>
        <strain>CaD3</strain>
    </source>
</reference>
<accession>Q3APH7</accession>
<evidence type="ECO:0000255" key="1">
    <source>
        <dbReference type="HAMAP-Rule" id="MF_00531"/>
    </source>
</evidence>
<evidence type="ECO:0000256" key="2">
    <source>
        <dbReference type="SAM" id="MobiDB-lite"/>
    </source>
</evidence>
<evidence type="ECO:0000305" key="3"/>
<organism>
    <name type="scientific">Chlorobium chlorochromatii (strain CaD3)</name>
    <dbReference type="NCBI Taxonomy" id="340177"/>
    <lineage>
        <taxon>Bacteria</taxon>
        <taxon>Pseudomonadati</taxon>
        <taxon>Chlorobiota</taxon>
        <taxon>Chlorobiia</taxon>
        <taxon>Chlorobiales</taxon>
        <taxon>Chlorobiaceae</taxon>
        <taxon>Chlorobium/Pelodictyon group</taxon>
        <taxon>Chlorobium</taxon>
    </lineage>
</organism>